<dbReference type="PIR" id="S29174">
    <property type="entry name" value="S29174"/>
</dbReference>
<dbReference type="GO" id="GO:0030246">
    <property type="term" value="F:carbohydrate binding"/>
    <property type="evidence" value="ECO:0007669"/>
    <property type="project" value="UniProtKB-KW"/>
</dbReference>
<name>LEC3_AXIPO</name>
<comment type="function">
    <text>Possesses D-galactose binding specificity.</text>
</comment>
<comment type="subunit">
    <text>Homodimer.</text>
</comment>
<comment type="tissue specificity">
    <text>Stored in spherulous cells in the sponge tissue.</text>
</comment>
<feature type="chain" id="PRO_0000084400" description="Lectin-3">
    <location>
        <begin position="1"/>
        <end position="15" status="greater than"/>
    </location>
</feature>
<feature type="non-terminal residue">
    <location>
        <position position="15"/>
    </location>
</feature>
<reference key="1">
    <citation type="journal article" date="1992" name="Biochim. Biophys. Acta">
        <title>Comparative investigations on the amino-acid sequences of different isolectins from the sponge Axinella polypoides (Schmidt).</title>
        <authorList>
            <person name="Buck F."/>
            <person name="Luth C."/>
            <person name="Strupat K."/>
            <person name="Bretting H."/>
        </authorList>
    </citation>
    <scope>PROTEIN SEQUENCE</scope>
</reference>
<keyword id="KW-0903">Direct protein sequencing</keyword>
<keyword id="KW-0430">Lectin</keyword>
<accession>P28588</accession>
<proteinExistence type="evidence at protein level"/>
<protein>
    <recommendedName>
        <fullName>Lectin-3</fullName>
    </recommendedName>
    <alternativeName>
        <fullName>Lectin III</fullName>
    </alternativeName>
</protein>
<sequence length="15" mass="1746">ASPXENYQXYVILNL</sequence>
<organism>
    <name type="scientific">Axinella polypoides</name>
    <name type="common">Yellow-orange branching sponge</name>
    <dbReference type="NCBI Taxonomy" id="12959"/>
    <lineage>
        <taxon>Eukaryota</taxon>
        <taxon>Metazoa</taxon>
        <taxon>Porifera</taxon>
        <taxon>Demospongiae</taxon>
        <taxon>Heteroscleromorpha</taxon>
        <taxon>Axinellida</taxon>
        <taxon>Axinellidae</taxon>
        <taxon>Axinella</taxon>
    </lineage>
</organism>